<protein>
    <recommendedName>
        <fullName evidence="1">Protein RecA</fullName>
    </recommendedName>
    <alternativeName>
        <fullName evidence="1">Recombinase A</fullName>
    </alternativeName>
</protein>
<feature type="chain" id="PRO_1000078670" description="Protein RecA">
    <location>
        <begin position="1"/>
        <end position="350"/>
    </location>
</feature>
<feature type="binding site" evidence="1">
    <location>
        <begin position="68"/>
        <end position="75"/>
    </location>
    <ligand>
        <name>ATP</name>
        <dbReference type="ChEBI" id="CHEBI:30616"/>
    </ligand>
</feature>
<gene>
    <name evidence="1" type="primary">recA</name>
    <name type="ordered locus">Mflv_3975</name>
</gene>
<proteinExistence type="inferred from homology"/>
<reference key="1">
    <citation type="submission" date="2007-04" db="EMBL/GenBank/DDBJ databases">
        <title>Complete sequence of chromosome of Mycobacterium gilvum PYR-GCK.</title>
        <authorList>
            <consortium name="US DOE Joint Genome Institute"/>
            <person name="Copeland A."/>
            <person name="Lucas S."/>
            <person name="Lapidus A."/>
            <person name="Barry K."/>
            <person name="Detter J.C."/>
            <person name="Glavina del Rio T."/>
            <person name="Hammon N."/>
            <person name="Israni S."/>
            <person name="Dalin E."/>
            <person name="Tice H."/>
            <person name="Pitluck S."/>
            <person name="Chain P."/>
            <person name="Malfatti S."/>
            <person name="Shin M."/>
            <person name="Vergez L."/>
            <person name="Schmutz J."/>
            <person name="Larimer F."/>
            <person name="Land M."/>
            <person name="Hauser L."/>
            <person name="Kyrpides N."/>
            <person name="Mikhailova N."/>
            <person name="Miller C."/>
            <person name="Richardson P."/>
        </authorList>
    </citation>
    <scope>NUCLEOTIDE SEQUENCE [LARGE SCALE GENOMIC DNA]</scope>
    <source>
        <strain>PYR-GCK</strain>
    </source>
</reference>
<evidence type="ECO:0000255" key="1">
    <source>
        <dbReference type="HAMAP-Rule" id="MF_00268"/>
    </source>
</evidence>
<sequence>MAQQAPDREKALELALAQIDKNFGKGSVMRLGEDVRPPIAVIPTGSIALDVALGIGGLPRGRVIEIYGPESSGKTTVALHAVANAQAAGGIAAFIDAEHALDPDYAKKLGVDTDALLVSQPDTGEQALEIADMLIRSGALDILVIDSVAALVPRAEIEGEMGDSHVGLQARLMSQALRKMTGALNNSGTTAIFINQLREKIGVMFGSPETTTGGKALKFYSSVRLDVRRIETLKDGTDAVGNRTRVKVVKNKVSPPFKQAEFDILYGKGISREGSLIDMGVEQGFIRKSGSWFTYDGEQLGQGKENARNFLLQNPDVGNEIEKKIKEKLGIGAQLTDDVADDALPAPVDF</sequence>
<comment type="function">
    <text evidence="1">Can catalyze the hydrolysis of ATP in the presence of single-stranded DNA, the ATP-dependent uptake of single-stranded DNA by duplex DNA, and the ATP-dependent hybridization of homologous single-stranded DNAs. It interacts with LexA causing its activation and leading to its autocatalytic cleavage.</text>
</comment>
<comment type="subcellular location">
    <subcellularLocation>
        <location evidence="1">Cytoplasm</location>
    </subcellularLocation>
</comment>
<comment type="similarity">
    <text evidence="1">Belongs to the RecA family.</text>
</comment>
<dbReference type="EMBL" id="CP000656">
    <property type="protein sequence ID" value="ABP46446.1"/>
    <property type="molecule type" value="Genomic_DNA"/>
</dbReference>
<dbReference type="SMR" id="A4TCL7"/>
<dbReference type="STRING" id="350054.Mflv_3975"/>
<dbReference type="KEGG" id="mgi:Mflv_3975"/>
<dbReference type="eggNOG" id="COG0468">
    <property type="taxonomic scope" value="Bacteria"/>
</dbReference>
<dbReference type="HOGENOM" id="CLU_040469_3_2_11"/>
<dbReference type="OrthoDB" id="9776733at2"/>
<dbReference type="GO" id="GO:0005829">
    <property type="term" value="C:cytosol"/>
    <property type="evidence" value="ECO:0007669"/>
    <property type="project" value="TreeGrafter"/>
</dbReference>
<dbReference type="GO" id="GO:0005524">
    <property type="term" value="F:ATP binding"/>
    <property type="evidence" value="ECO:0007669"/>
    <property type="project" value="UniProtKB-UniRule"/>
</dbReference>
<dbReference type="GO" id="GO:0016887">
    <property type="term" value="F:ATP hydrolysis activity"/>
    <property type="evidence" value="ECO:0007669"/>
    <property type="project" value="InterPro"/>
</dbReference>
<dbReference type="GO" id="GO:0140664">
    <property type="term" value="F:ATP-dependent DNA damage sensor activity"/>
    <property type="evidence" value="ECO:0007669"/>
    <property type="project" value="InterPro"/>
</dbReference>
<dbReference type="GO" id="GO:0003684">
    <property type="term" value="F:damaged DNA binding"/>
    <property type="evidence" value="ECO:0007669"/>
    <property type="project" value="UniProtKB-UniRule"/>
</dbReference>
<dbReference type="GO" id="GO:0003697">
    <property type="term" value="F:single-stranded DNA binding"/>
    <property type="evidence" value="ECO:0007669"/>
    <property type="project" value="UniProtKB-UniRule"/>
</dbReference>
<dbReference type="GO" id="GO:0006310">
    <property type="term" value="P:DNA recombination"/>
    <property type="evidence" value="ECO:0007669"/>
    <property type="project" value="UniProtKB-UniRule"/>
</dbReference>
<dbReference type="GO" id="GO:0006281">
    <property type="term" value="P:DNA repair"/>
    <property type="evidence" value="ECO:0007669"/>
    <property type="project" value="UniProtKB-UniRule"/>
</dbReference>
<dbReference type="GO" id="GO:0009432">
    <property type="term" value="P:SOS response"/>
    <property type="evidence" value="ECO:0007669"/>
    <property type="project" value="UniProtKB-UniRule"/>
</dbReference>
<dbReference type="CDD" id="cd00983">
    <property type="entry name" value="RecA"/>
    <property type="match status" value="1"/>
</dbReference>
<dbReference type="FunFam" id="3.40.50.300:FF:002436">
    <property type="entry name" value="Protein RecA"/>
    <property type="match status" value="1"/>
</dbReference>
<dbReference type="Gene3D" id="3.40.50.300">
    <property type="entry name" value="P-loop containing nucleotide triphosphate hydrolases"/>
    <property type="match status" value="1"/>
</dbReference>
<dbReference type="HAMAP" id="MF_00268">
    <property type="entry name" value="RecA"/>
    <property type="match status" value="1"/>
</dbReference>
<dbReference type="InterPro" id="IPR003593">
    <property type="entry name" value="AAA+_ATPase"/>
</dbReference>
<dbReference type="InterPro" id="IPR013765">
    <property type="entry name" value="DNA_recomb/repair_RecA"/>
</dbReference>
<dbReference type="InterPro" id="IPR020584">
    <property type="entry name" value="DNA_recomb/repair_RecA_CS"/>
</dbReference>
<dbReference type="InterPro" id="IPR027417">
    <property type="entry name" value="P-loop_NTPase"/>
</dbReference>
<dbReference type="InterPro" id="IPR049261">
    <property type="entry name" value="RecA-like_C"/>
</dbReference>
<dbReference type="InterPro" id="IPR049428">
    <property type="entry name" value="RecA-like_N"/>
</dbReference>
<dbReference type="InterPro" id="IPR020588">
    <property type="entry name" value="RecA_ATP-bd"/>
</dbReference>
<dbReference type="InterPro" id="IPR023400">
    <property type="entry name" value="RecA_C_sf"/>
</dbReference>
<dbReference type="InterPro" id="IPR020587">
    <property type="entry name" value="RecA_monomer-monomer_interface"/>
</dbReference>
<dbReference type="NCBIfam" id="TIGR02012">
    <property type="entry name" value="tigrfam_recA"/>
    <property type="match status" value="1"/>
</dbReference>
<dbReference type="PANTHER" id="PTHR45900:SF1">
    <property type="entry name" value="MITOCHONDRIAL DNA REPAIR PROTEIN RECA HOMOLOG-RELATED"/>
    <property type="match status" value="1"/>
</dbReference>
<dbReference type="PANTHER" id="PTHR45900">
    <property type="entry name" value="RECA"/>
    <property type="match status" value="1"/>
</dbReference>
<dbReference type="Pfam" id="PF00154">
    <property type="entry name" value="RecA"/>
    <property type="match status" value="1"/>
</dbReference>
<dbReference type="Pfam" id="PF21096">
    <property type="entry name" value="RecA_C"/>
    <property type="match status" value="1"/>
</dbReference>
<dbReference type="PRINTS" id="PR00142">
    <property type="entry name" value="RECA"/>
</dbReference>
<dbReference type="SMART" id="SM00382">
    <property type="entry name" value="AAA"/>
    <property type="match status" value="1"/>
</dbReference>
<dbReference type="SUPFAM" id="SSF52540">
    <property type="entry name" value="P-loop containing nucleoside triphosphate hydrolases"/>
    <property type="match status" value="1"/>
</dbReference>
<dbReference type="SUPFAM" id="SSF54752">
    <property type="entry name" value="RecA protein, C-terminal domain"/>
    <property type="match status" value="1"/>
</dbReference>
<dbReference type="PROSITE" id="PS00321">
    <property type="entry name" value="RECA_1"/>
    <property type="match status" value="1"/>
</dbReference>
<dbReference type="PROSITE" id="PS50162">
    <property type="entry name" value="RECA_2"/>
    <property type="match status" value="1"/>
</dbReference>
<dbReference type="PROSITE" id="PS50163">
    <property type="entry name" value="RECA_3"/>
    <property type="match status" value="1"/>
</dbReference>
<keyword id="KW-0067">ATP-binding</keyword>
<keyword id="KW-0963">Cytoplasm</keyword>
<keyword id="KW-0227">DNA damage</keyword>
<keyword id="KW-0233">DNA recombination</keyword>
<keyword id="KW-0234">DNA repair</keyword>
<keyword id="KW-0238">DNA-binding</keyword>
<keyword id="KW-0547">Nucleotide-binding</keyword>
<keyword id="KW-0742">SOS response</keyword>
<name>RECA_MYCGI</name>
<organism>
    <name type="scientific">Mycolicibacterium gilvum (strain PYR-GCK)</name>
    <name type="common">Mycobacterium gilvum (strain PYR-GCK)</name>
    <dbReference type="NCBI Taxonomy" id="350054"/>
    <lineage>
        <taxon>Bacteria</taxon>
        <taxon>Bacillati</taxon>
        <taxon>Actinomycetota</taxon>
        <taxon>Actinomycetes</taxon>
        <taxon>Mycobacteriales</taxon>
        <taxon>Mycobacteriaceae</taxon>
        <taxon>Mycolicibacterium</taxon>
    </lineage>
</organism>
<accession>A4TCL7</accession>